<feature type="chain" id="PRO_0000264133" description="Peptidyl-tRNA hydrolase">
    <location>
        <begin position="1"/>
        <end position="192"/>
    </location>
</feature>
<feature type="active site" description="Proton acceptor" evidence="1">
    <location>
        <position position="22"/>
    </location>
</feature>
<feature type="binding site" evidence="1">
    <location>
        <position position="17"/>
    </location>
    <ligand>
        <name>tRNA</name>
        <dbReference type="ChEBI" id="CHEBI:17843"/>
    </ligand>
</feature>
<feature type="binding site" evidence="1">
    <location>
        <position position="68"/>
    </location>
    <ligand>
        <name>tRNA</name>
        <dbReference type="ChEBI" id="CHEBI:17843"/>
    </ligand>
</feature>
<feature type="binding site" evidence="1">
    <location>
        <position position="70"/>
    </location>
    <ligand>
        <name>tRNA</name>
        <dbReference type="ChEBI" id="CHEBI:17843"/>
    </ligand>
</feature>
<feature type="binding site" evidence="1">
    <location>
        <position position="116"/>
    </location>
    <ligand>
        <name>tRNA</name>
        <dbReference type="ChEBI" id="CHEBI:17843"/>
    </ligand>
</feature>
<feature type="site" description="Discriminates between blocked and unblocked aminoacyl-tRNA" evidence="1">
    <location>
        <position position="12"/>
    </location>
</feature>
<feature type="site" description="Stabilizes the basic form of H active site to accept a proton" evidence="1">
    <location>
        <position position="95"/>
    </location>
</feature>
<reference key="1">
    <citation type="journal article" date="2006" name="PLoS Biol.">
        <title>The genome of deep-sea vent chemolithoautotroph Thiomicrospira crunogena XCL-2.</title>
        <authorList>
            <person name="Scott K.M."/>
            <person name="Sievert S.M."/>
            <person name="Abril F.N."/>
            <person name="Ball L.A."/>
            <person name="Barrett C.J."/>
            <person name="Blake R.A."/>
            <person name="Boller A.J."/>
            <person name="Chain P.S.G."/>
            <person name="Clark J.A."/>
            <person name="Davis C.R."/>
            <person name="Detter C."/>
            <person name="Do K.F."/>
            <person name="Dobrinski K.P."/>
            <person name="Faza B.I."/>
            <person name="Fitzpatrick K.A."/>
            <person name="Freyermuth S.K."/>
            <person name="Harmer T.L."/>
            <person name="Hauser L.J."/>
            <person name="Huegler M."/>
            <person name="Kerfeld C.A."/>
            <person name="Klotz M.G."/>
            <person name="Kong W.W."/>
            <person name="Land M."/>
            <person name="Lapidus A."/>
            <person name="Larimer F.W."/>
            <person name="Longo D.L."/>
            <person name="Lucas S."/>
            <person name="Malfatti S.A."/>
            <person name="Massey S.E."/>
            <person name="Martin D.D."/>
            <person name="McCuddin Z."/>
            <person name="Meyer F."/>
            <person name="Moore J.L."/>
            <person name="Ocampo L.H. Jr."/>
            <person name="Paul J.H."/>
            <person name="Paulsen I.T."/>
            <person name="Reep D.K."/>
            <person name="Ren Q."/>
            <person name="Ross R.L."/>
            <person name="Sato P.Y."/>
            <person name="Thomas P."/>
            <person name="Tinkham L.E."/>
            <person name="Zeruth G.T."/>
        </authorList>
    </citation>
    <scope>NUCLEOTIDE SEQUENCE [LARGE SCALE GENOMIC DNA]</scope>
    <source>
        <strain>DSM 25203 / XCL-2</strain>
    </source>
</reference>
<name>PTH_HYDCU</name>
<organism>
    <name type="scientific">Hydrogenovibrio crunogenus (strain DSM 25203 / XCL-2)</name>
    <name type="common">Thiomicrospira crunogena</name>
    <dbReference type="NCBI Taxonomy" id="317025"/>
    <lineage>
        <taxon>Bacteria</taxon>
        <taxon>Pseudomonadati</taxon>
        <taxon>Pseudomonadota</taxon>
        <taxon>Gammaproteobacteria</taxon>
        <taxon>Thiotrichales</taxon>
        <taxon>Piscirickettsiaceae</taxon>
        <taxon>Hydrogenovibrio</taxon>
    </lineage>
</organism>
<evidence type="ECO:0000255" key="1">
    <source>
        <dbReference type="HAMAP-Rule" id="MF_00083"/>
    </source>
</evidence>
<accession>Q31IN3</accession>
<keyword id="KW-0963">Cytoplasm</keyword>
<keyword id="KW-0378">Hydrolase</keyword>
<keyword id="KW-0694">RNA-binding</keyword>
<keyword id="KW-0820">tRNA-binding</keyword>
<gene>
    <name evidence="1" type="primary">pth</name>
    <name type="ordered locus">Tcr_0394</name>
</gene>
<dbReference type="EC" id="3.1.1.29" evidence="1"/>
<dbReference type="EMBL" id="CP000109">
    <property type="protein sequence ID" value="ABB40990.1"/>
    <property type="molecule type" value="Genomic_DNA"/>
</dbReference>
<dbReference type="SMR" id="Q31IN3"/>
<dbReference type="STRING" id="317025.Tcr_0394"/>
<dbReference type="KEGG" id="tcx:Tcr_0394"/>
<dbReference type="eggNOG" id="COG0193">
    <property type="taxonomic scope" value="Bacteria"/>
</dbReference>
<dbReference type="HOGENOM" id="CLU_062456_3_1_6"/>
<dbReference type="OrthoDB" id="9800507at2"/>
<dbReference type="GO" id="GO:0005737">
    <property type="term" value="C:cytoplasm"/>
    <property type="evidence" value="ECO:0007669"/>
    <property type="project" value="UniProtKB-SubCell"/>
</dbReference>
<dbReference type="GO" id="GO:0004045">
    <property type="term" value="F:peptidyl-tRNA hydrolase activity"/>
    <property type="evidence" value="ECO:0007669"/>
    <property type="project" value="UniProtKB-UniRule"/>
</dbReference>
<dbReference type="GO" id="GO:0000049">
    <property type="term" value="F:tRNA binding"/>
    <property type="evidence" value="ECO:0007669"/>
    <property type="project" value="UniProtKB-UniRule"/>
</dbReference>
<dbReference type="GO" id="GO:0006515">
    <property type="term" value="P:protein quality control for misfolded or incompletely synthesized proteins"/>
    <property type="evidence" value="ECO:0007669"/>
    <property type="project" value="UniProtKB-UniRule"/>
</dbReference>
<dbReference type="GO" id="GO:0072344">
    <property type="term" value="P:rescue of stalled ribosome"/>
    <property type="evidence" value="ECO:0007669"/>
    <property type="project" value="UniProtKB-UniRule"/>
</dbReference>
<dbReference type="CDD" id="cd00462">
    <property type="entry name" value="PTH"/>
    <property type="match status" value="1"/>
</dbReference>
<dbReference type="FunFam" id="3.40.50.1470:FF:000001">
    <property type="entry name" value="Peptidyl-tRNA hydrolase"/>
    <property type="match status" value="1"/>
</dbReference>
<dbReference type="Gene3D" id="3.40.50.1470">
    <property type="entry name" value="Peptidyl-tRNA hydrolase"/>
    <property type="match status" value="1"/>
</dbReference>
<dbReference type="HAMAP" id="MF_00083">
    <property type="entry name" value="Pept_tRNA_hydro_bact"/>
    <property type="match status" value="1"/>
</dbReference>
<dbReference type="InterPro" id="IPR001328">
    <property type="entry name" value="Pept_tRNA_hydro"/>
</dbReference>
<dbReference type="InterPro" id="IPR018171">
    <property type="entry name" value="Pept_tRNA_hydro_CS"/>
</dbReference>
<dbReference type="InterPro" id="IPR036416">
    <property type="entry name" value="Pept_tRNA_hydro_sf"/>
</dbReference>
<dbReference type="NCBIfam" id="TIGR00447">
    <property type="entry name" value="pth"/>
    <property type="match status" value="1"/>
</dbReference>
<dbReference type="PANTHER" id="PTHR17224">
    <property type="entry name" value="PEPTIDYL-TRNA HYDROLASE"/>
    <property type="match status" value="1"/>
</dbReference>
<dbReference type="PANTHER" id="PTHR17224:SF1">
    <property type="entry name" value="PEPTIDYL-TRNA HYDROLASE"/>
    <property type="match status" value="1"/>
</dbReference>
<dbReference type="Pfam" id="PF01195">
    <property type="entry name" value="Pept_tRNA_hydro"/>
    <property type="match status" value="1"/>
</dbReference>
<dbReference type="SUPFAM" id="SSF53178">
    <property type="entry name" value="Peptidyl-tRNA hydrolase-like"/>
    <property type="match status" value="1"/>
</dbReference>
<dbReference type="PROSITE" id="PS01195">
    <property type="entry name" value="PEPT_TRNA_HYDROL_1"/>
    <property type="match status" value="1"/>
</dbReference>
<dbReference type="PROSITE" id="PS01196">
    <property type="entry name" value="PEPT_TRNA_HYDROL_2"/>
    <property type="match status" value="1"/>
</dbReference>
<sequence length="192" mass="21327">MSSVKLIVGLGNPGGQYEQTRHNAGFWFVEDVARQYNVQFRPETKFLGEAARIQSNGLDVWLLKPMTFMNRSGQSIQAIAKFYKIAPEEILVVHDELDLDPGVARLKTSGGHGGHNGLRDTIAALGTKDFKRLRLGIGHPGDRNQVVDYVLKAPSKTDRALIDDAIYDATRVLPDLLNDDMARAMNELHTKT</sequence>
<proteinExistence type="inferred from homology"/>
<comment type="function">
    <text evidence="1">Hydrolyzes ribosome-free peptidyl-tRNAs (with 1 or more amino acids incorporated), which drop off the ribosome during protein synthesis, or as a result of ribosome stalling.</text>
</comment>
<comment type="function">
    <text evidence="1">Catalyzes the release of premature peptidyl moieties from peptidyl-tRNA molecules trapped in stalled 50S ribosomal subunits, and thus maintains levels of free tRNAs and 50S ribosomes.</text>
</comment>
<comment type="catalytic activity">
    <reaction evidence="1">
        <text>an N-acyl-L-alpha-aminoacyl-tRNA + H2O = an N-acyl-L-amino acid + a tRNA + H(+)</text>
        <dbReference type="Rhea" id="RHEA:54448"/>
        <dbReference type="Rhea" id="RHEA-COMP:10123"/>
        <dbReference type="Rhea" id="RHEA-COMP:13883"/>
        <dbReference type="ChEBI" id="CHEBI:15377"/>
        <dbReference type="ChEBI" id="CHEBI:15378"/>
        <dbReference type="ChEBI" id="CHEBI:59874"/>
        <dbReference type="ChEBI" id="CHEBI:78442"/>
        <dbReference type="ChEBI" id="CHEBI:138191"/>
        <dbReference type="EC" id="3.1.1.29"/>
    </reaction>
</comment>
<comment type="subunit">
    <text evidence="1">Monomer.</text>
</comment>
<comment type="subcellular location">
    <subcellularLocation>
        <location evidence="1">Cytoplasm</location>
    </subcellularLocation>
</comment>
<comment type="similarity">
    <text evidence="1">Belongs to the PTH family.</text>
</comment>
<protein>
    <recommendedName>
        <fullName evidence="1">Peptidyl-tRNA hydrolase</fullName>
        <shortName evidence="1">Pth</shortName>
        <ecNumber evidence="1">3.1.1.29</ecNumber>
    </recommendedName>
</protein>